<keyword id="KW-0001">2Fe-2S</keyword>
<keyword id="KW-0004">4Fe-4S</keyword>
<keyword id="KW-0093">Biotin biosynthesis</keyword>
<keyword id="KW-0408">Iron</keyword>
<keyword id="KW-0411">Iron-sulfur</keyword>
<keyword id="KW-0479">Metal-binding</keyword>
<keyword id="KW-0949">S-adenosyl-L-methionine</keyword>
<keyword id="KW-0808">Transferase</keyword>
<feature type="chain" id="PRO_0000381398" description="Biotin synthase">
    <location>
        <begin position="1"/>
        <end position="313"/>
    </location>
</feature>
<feature type="domain" description="Radical SAM core" evidence="2">
    <location>
        <begin position="28"/>
        <end position="258"/>
    </location>
</feature>
<feature type="binding site" evidence="1">
    <location>
        <position position="46"/>
    </location>
    <ligand>
        <name>[4Fe-4S] cluster</name>
        <dbReference type="ChEBI" id="CHEBI:49883"/>
        <note>4Fe-4S-S-AdoMet</note>
    </ligand>
</feature>
<feature type="binding site" evidence="1">
    <location>
        <position position="50"/>
    </location>
    <ligand>
        <name>[4Fe-4S] cluster</name>
        <dbReference type="ChEBI" id="CHEBI:49883"/>
        <note>4Fe-4S-S-AdoMet</note>
    </ligand>
</feature>
<feature type="binding site" evidence="1">
    <location>
        <position position="53"/>
    </location>
    <ligand>
        <name>[4Fe-4S] cluster</name>
        <dbReference type="ChEBI" id="CHEBI:49883"/>
        <note>4Fe-4S-S-AdoMet</note>
    </ligand>
</feature>
<feature type="binding site" evidence="1">
    <location>
        <position position="90"/>
    </location>
    <ligand>
        <name>[2Fe-2S] cluster</name>
        <dbReference type="ChEBI" id="CHEBI:190135"/>
    </ligand>
</feature>
<feature type="binding site" evidence="1">
    <location>
        <position position="121"/>
    </location>
    <ligand>
        <name>[2Fe-2S] cluster</name>
        <dbReference type="ChEBI" id="CHEBI:190135"/>
    </ligand>
</feature>
<feature type="binding site" evidence="1">
    <location>
        <position position="181"/>
    </location>
    <ligand>
        <name>[2Fe-2S] cluster</name>
        <dbReference type="ChEBI" id="CHEBI:190135"/>
    </ligand>
</feature>
<feature type="binding site" evidence="1">
    <location>
        <position position="256"/>
    </location>
    <ligand>
        <name>[2Fe-2S] cluster</name>
        <dbReference type="ChEBI" id="CHEBI:190135"/>
    </ligand>
</feature>
<name>BIOB_FRATW</name>
<proteinExistence type="inferred from homology"/>
<sequence>MTLQQIKEIYSRPLTELILQALEIHNKNFGNDIELCSLKSIKTGTCPEDCKYCPQSGHYNTSIEKHKLLDKDSILAEAKNAKDAGSKRFCMGAAWKHIPKKDFDQVAEIITEVKNLGLETCVTLGSINADEATKLKQAGLDYYNHNLDTSREFYPEIITTRKFEERIETIRNVANADINVCCGGILGMGESLDDRFNLLLELLQLPAAPKSIPINTLIPVKGTPLGDKYTNAQIDSFELVRFIATTRILFPQARLRLSAGRENMSLETQTLCFLAGINSIFYGNKLLTENNATVNSDNFLLAKLGLKSNAELC</sequence>
<organism>
    <name type="scientific">Francisella tularensis subsp. tularensis (strain WY96-3418)</name>
    <dbReference type="NCBI Taxonomy" id="418136"/>
    <lineage>
        <taxon>Bacteria</taxon>
        <taxon>Pseudomonadati</taxon>
        <taxon>Pseudomonadota</taxon>
        <taxon>Gammaproteobacteria</taxon>
        <taxon>Thiotrichales</taxon>
        <taxon>Francisellaceae</taxon>
        <taxon>Francisella</taxon>
    </lineage>
</organism>
<gene>
    <name evidence="1" type="primary">bioB</name>
    <name type="ordered locus">FTW_0831</name>
</gene>
<evidence type="ECO:0000255" key="1">
    <source>
        <dbReference type="HAMAP-Rule" id="MF_01694"/>
    </source>
</evidence>
<evidence type="ECO:0000255" key="2">
    <source>
        <dbReference type="PROSITE-ProRule" id="PRU01266"/>
    </source>
</evidence>
<reference key="1">
    <citation type="journal article" date="2007" name="PLoS ONE">
        <title>Complete genomic characterization of a pathogenic A.II strain of Francisella tularensis subspecies tularensis.</title>
        <authorList>
            <person name="Beckstrom-Sternberg S.M."/>
            <person name="Auerbach R.K."/>
            <person name="Godbole S."/>
            <person name="Pearson J.V."/>
            <person name="Beckstrom-Sternberg J.S."/>
            <person name="Deng Z."/>
            <person name="Munk C."/>
            <person name="Kubota K."/>
            <person name="Zhou Y."/>
            <person name="Bruce D."/>
            <person name="Noronha J."/>
            <person name="Scheuermann R.H."/>
            <person name="Wang A."/>
            <person name="Wei X."/>
            <person name="Wang J."/>
            <person name="Hao J."/>
            <person name="Wagner D.M."/>
            <person name="Brettin T.S."/>
            <person name="Brown N."/>
            <person name="Gilna P."/>
            <person name="Keim P.S."/>
        </authorList>
    </citation>
    <scope>NUCLEOTIDE SEQUENCE [LARGE SCALE GENOMIC DNA]</scope>
    <source>
        <strain>WY96-3418</strain>
    </source>
</reference>
<accession>A4IXP5</accession>
<dbReference type="EC" id="2.8.1.6" evidence="1"/>
<dbReference type="EMBL" id="CP000608">
    <property type="protein sequence ID" value="ABO46696.1"/>
    <property type="molecule type" value="Genomic_DNA"/>
</dbReference>
<dbReference type="RefSeq" id="WP_003026016.1">
    <property type="nucleotide sequence ID" value="NC_009257.1"/>
</dbReference>
<dbReference type="SMR" id="A4IXP5"/>
<dbReference type="KEGG" id="ftw:FTW_0831"/>
<dbReference type="HOGENOM" id="CLU_033172_1_2_6"/>
<dbReference type="UniPathway" id="UPA00078">
    <property type="reaction ID" value="UER00162"/>
</dbReference>
<dbReference type="GO" id="GO:0051537">
    <property type="term" value="F:2 iron, 2 sulfur cluster binding"/>
    <property type="evidence" value="ECO:0007669"/>
    <property type="project" value="UniProtKB-KW"/>
</dbReference>
<dbReference type="GO" id="GO:0051539">
    <property type="term" value="F:4 iron, 4 sulfur cluster binding"/>
    <property type="evidence" value="ECO:0007669"/>
    <property type="project" value="UniProtKB-KW"/>
</dbReference>
<dbReference type="GO" id="GO:0004076">
    <property type="term" value="F:biotin synthase activity"/>
    <property type="evidence" value="ECO:0007669"/>
    <property type="project" value="UniProtKB-UniRule"/>
</dbReference>
<dbReference type="GO" id="GO:0005506">
    <property type="term" value="F:iron ion binding"/>
    <property type="evidence" value="ECO:0007669"/>
    <property type="project" value="UniProtKB-UniRule"/>
</dbReference>
<dbReference type="GO" id="GO:0009102">
    <property type="term" value="P:biotin biosynthetic process"/>
    <property type="evidence" value="ECO:0007669"/>
    <property type="project" value="UniProtKB-UniRule"/>
</dbReference>
<dbReference type="CDD" id="cd01335">
    <property type="entry name" value="Radical_SAM"/>
    <property type="match status" value="1"/>
</dbReference>
<dbReference type="Gene3D" id="3.20.20.70">
    <property type="entry name" value="Aldolase class I"/>
    <property type="match status" value="1"/>
</dbReference>
<dbReference type="HAMAP" id="MF_01694">
    <property type="entry name" value="BioB"/>
    <property type="match status" value="1"/>
</dbReference>
<dbReference type="InterPro" id="IPR013785">
    <property type="entry name" value="Aldolase_TIM"/>
</dbReference>
<dbReference type="InterPro" id="IPR010722">
    <property type="entry name" value="BATS_dom"/>
</dbReference>
<dbReference type="InterPro" id="IPR002684">
    <property type="entry name" value="Biotin_synth/BioAB"/>
</dbReference>
<dbReference type="InterPro" id="IPR024177">
    <property type="entry name" value="Biotin_synthase"/>
</dbReference>
<dbReference type="InterPro" id="IPR006638">
    <property type="entry name" value="Elp3/MiaA/NifB-like_rSAM"/>
</dbReference>
<dbReference type="InterPro" id="IPR007197">
    <property type="entry name" value="rSAM"/>
</dbReference>
<dbReference type="NCBIfam" id="TIGR00433">
    <property type="entry name" value="bioB"/>
    <property type="match status" value="1"/>
</dbReference>
<dbReference type="PANTHER" id="PTHR22976">
    <property type="entry name" value="BIOTIN SYNTHASE"/>
    <property type="match status" value="1"/>
</dbReference>
<dbReference type="PANTHER" id="PTHR22976:SF2">
    <property type="entry name" value="BIOTIN SYNTHASE, MITOCHONDRIAL"/>
    <property type="match status" value="1"/>
</dbReference>
<dbReference type="Pfam" id="PF06968">
    <property type="entry name" value="BATS"/>
    <property type="match status" value="1"/>
</dbReference>
<dbReference type="Pfam" id="PF04055">
    <property type="entry name" value="Radical_SAM"/>
    <property type="match status" value="1"/>
</dbReference>
<dbReference type="PIRSF" id="PIRSF001619">
    <property type="entry name" value="Biotin_synth"/>
    <property type="match status" value="1"/>
</dbReference>
<dbReference type="SFLD" id="SFLDF00272">
    <property type="entry name" value="biotin_synthase"/>
    <property type="match status" value="1"/>
</dbReference>
<dbReference type="SFLD" id="SFLDS00029">
    <property type="entry name" value="Radical_SAM"/>
    <property type="match status" value="1"/>
</dbReference>
<dbReference type="SMART" id="SM00876">
    <property type="entry name" value="BATS"/>
    <property type="match status" value="1"/>
</dbReference>
<dbReference type="SMART" id="SM00729">
    <property type="entry name" value="Elp3"/>
    <property type="match status" value="1"/>
</dbReference>
<dbReference type="SUPFAM" id="SSF102114">
    <property type="entry name" value="Radical SAM enzymes"/>
    <property type="match status" value="1"/>
</dbReference>
<dbReference type="PROSITE" id="PS51918">
    <property type="entry name" value="RADICAL_SAM"/>
    <property type="match status" value="1"/>
</dbReference>
<protein>
    <recommendedName>
        <fullName evidence="1">Biotin synthase</fullName>
        <ecNumber evidence="1">2.8.1.6</ecNumber>
    </recommendedName>
</protein>
<comment type="function">
    <text evidence="1">Catalyzes the conversion of dethiobiotin (DTB) to biotin by the insertion of a sulfur atom into dethiobiotin via a radical-based mechanism.</text>
</comment>
<comment type="catalytic activity">
    <reaction evidence="1">
        <text>(4R,5S)-dethiobiotin + (sulfur carrier)-SH + 2 reduced [2Fe-2S]-[ferredoxin] + 2 S-adenosyl-L-methionine = (sulfur carrier)-H + biotin + 2 5'-deoxyadenosine + 2 L-methionine + 2 oxidized [2Fe-2S]-[ferredoxin]</text>
        <dbReference type="Rhea" id="RHEA:22060"/>
        <dbReference type="Rhea" id="RHEA-COMP:10000"/>
        <dbReference type="Rhea" id="RHEA-COMP:10001"/>
        <dbReference type="Rhea" id="RHEA-COMP:14737"/>
        <dbReference type="Rhea" id="RHEA-COMP:14739"/>
        <dbReference type="ChEBI" id="CHEBI:17319"/>
        <dbReference type="ChEBI" id="CHEBI:29917"/>
        <dbReference type="ChEBI" id="CHEBI:33737"/>
        <dbReference type="ChEBI" id="CHEBI:33738"/>
        <dbReference type="ChEBI" id="CHEBI:57586"/>
        <dbReference type="ChEBI" id="CHEBI:57844"/>
        <dbReference type="ChEBI" id="CHEBI:59789"/>
        <dbReference type="ChEBI" id="CHEBI:64428"/>
        <dbReference type="ChEBI" id="CHEBI:149473"/>
        <dbReference type="EC" id="2.8.1.6"/>
    </reaction>
</comment>
<comment type="cofactor">
    <cofactor evidence="1">
        <name>[4Fe-4S] cluster</name>
        <dbReference type="ChEBI" id="CHEBI:49883"/>
    </cofactor>
    <text evidence="1">Binds 1 [4Fe-4S] cluster. The cluster is coordinated with 3 cysteines and an exchangeable S-adenosyl-L-methionine.</text>
</comment>
<comment type="cofactor">
    <cofactor evidence="1">
        <name>[2Fe-2S] cluster</name>
        <dbReference type="ChEBI" id="CHEBI:190135"/>
    </cofactor>
    <text evidence="1">Binds 1 [2Fe-2S] cluster. The cluster is coordinated with 3 cysteines and 1 arginine.</text>
</comment>
<comment type="pathway">
    <text evidence="1">Cofactor biosynthesis; biotin biosynthesis; biotin from 7,8-diaminononanoate: step 2/2.</text>
</comment>
<comment type="subunit">
    <text evidence="1">Homodimer.</text>
</comment>
<comment type="similarity">
    <text evidence="1">Belongs to the radical SAM superfamily. Biotin synthase family.</text>
</comment>